<comment type="function">
    <text evidence="2">Catalyzes the oxidation of 5,10-methylenetetrahydrofolate to 5,10-methenyltetrahydrofolate and then the hydrolysis of 5,10-methenyltetrahydrofolate to 10-formyltetrahydrofolate.</text>
</comment>
<comment type="catalytic activity">
    <reaction evidence="2">
        <text>(6R)-5,10-methylene-5,6,7,8-tetrahydrofolate + NADP(+) = (6R)-5,10-methenyltetrahydrofolate + NADPH</text>
        <dbReference type="Rhea" id="RHEA:22812"/>
        <dbReference type="ChEBI" id="CHEBI:15636"/>
        <dbReference type="ChEBI" id="CHEBI:57455"/>
        <dbReference type="ChEBI" id="CHEBI:57783"/>
        <dbReference type="ChEBI" id="CHEBI:58349"/>
        <dbReference type="EC" id="1.5.1.5"/>
    </reaction>
</comment>
<comment type="catalytic activity">
    <reaction evidence="2">
        <text>(6R)-5,10-methenyltetrahydrofolate + H2O = (6R)-10-formyltetrahydrofolate + H(+)</text>
        <dbReference type="Rhea" id="RHEA:23700"/>
        <dbReference type="ChEBI" id="CHEBI:15377"/>
        <dbReference type="ChEBI" id="CHEBI:15378"/>
        <dbReference type="ChEBI" id="CHEBI:57455"/>
        <dbReference type="ChEBI" id="CHEBI:195366"/>
        <dbReference type="EC" id="3.5.4.9"/>
    </reaction>
</comment>
<comment type="pathway">
    <text evidence="2">One-carbon metabolism; tetrahydrofolate interconversion.</text>
</comment>
<comment type="subunit">
    <text evidence="2">Homodimer.</text>
</comment>
<comment type="similarity">
    <text evidence="2">Belongs to the tetrahydrofolate dehydrogenase/cyclohydrolase family.</text>
</comment>
<accession>Q32JK7</accession>
<proteinExistence type="inferred from homology"/>
<feature type="initiator methionine" description="Removed" evidence="1">
    <location>
        <position position="1"/>
    </location>
</feature>
<feature type="chain" id="PRO_0000268498" description="Bifunctional protein FolD">
    <location>
        <begin position="2"/>
        <end position="288"/>
    </location>
</feature>
<feature type="binding site" evidence="2">
    <location>
        <begin position="166"/>
        <end position="168"/>
    </location>
    <ligand>
        <name>NADP(+)</name>
        <dbReference type="ChEBI" id="CHEBI:58349"/>
    </ligand>
</feature>
<feature type="binding site" evidence="2">
    <location>
        <position position="232"/>
    </location>
    <ligand>
        <name>NADP(+)</name>
        <dbReference type="ChEBI" id="CHEBI:58349"/>
    </ligand>
</feature>
<sequence>MAAKIIDGKTIAQQVRSEVAQKVQARIAAGLRAPGLAVVLVGSNPASQIYVASKRKACEEVGFVSRSYDLPETTSEAELLELIDALNADNTIDGILVQLPLPAGIDNVKVLERIHPDKDVDGFHPYNVGRLCQRAPRLRPCTPRGIVTLLERYNIDTFGLNAVVIGASNIVGRPMSMELLLAGCTTTVTHRFTKNLRHHVENADLLIVAVGKPGFIPGDWIKEGAIVIDVGINRLENGKVVGDVVFEDAAKHASYITPVPGGVGPMTVATLIENTLQACVEYHDPQDE</sequence>
<name>FOLD_SHIDS</name>
<evidence type="ECO:0000250" key="1"/>
<evidence type="ECO:0000255" key="2">
    <source>
        <dbReference type="HAMAP-Rule" id="MF_01576"/>
    </source>
</evidence>
<keyword id="KW-0028">Amino-acid biosynthesis</keyword>
<keyword id="KW-0368">Histidine biosynthesis</keyword>
<keyword id="KW-0378">Hydrolase</keyword>
<keyword id="KW-0486">Methionine biosynthesis</keyword>
<keyword id="KW-0511">Multifunctional enzyme</keyword>
<keyword id="KW-0521">NADP</keyword>
<keyword id="KW-0554">One-carbon metabolism</keyword>
<keyword id="KW-0560">Oxidoreductase</keyword>
<keyword id="KW-0658">Purine biosynthesis</keyword>
<keyword id="KW-1185">Reference proteome</keyword>
<gene>
    <name evidence="2" type="primary">folD</name>
    <name type="ordered locus">SDY_0281</name>
</gene>
<organism>
    <name type="scientific">Shigella dysenteriae serotype 1 (strain Sd197)</name>
    <dbReference type="NCBI Taxonomy" id="300267"/>
    <lineage>
        <taxon>Bacteria</taxon>
        <taxon>Pseudomonadati</taxon>
        <taxon>Pseudomonadota</taxon>
        <taxon>Gammaproteobacteria</taxon>
        <taxon>Enterobacterales</taxon>
        <taxon>Enterobacteriaceae</taxon>
        <taxon>Shigella</taxon>
    </lineage>
</organism>
<reference key="1">
    <citation type="journal article" date="2005" name="Nucleic Acids Res.">
        <title>Genome dynamics and diversity of Shigella species, the etiologic agents of bacillary dysentery.</title>
        <authorList>
            <person name="Yang F."/>
            <person name="Yang J."/>
            <person name="Zhang X."/>
            <person name="Chen L."/>
            <person name="Jiang Y."/>
            <person name="Yan Y."/>
            <person name="Tang X."/>
            <person name="Wang J."/>
            <person name="Xiong Z."/>
            <person name="Dong J."/>
            <person name="Xue Y."/>
            <person name="Zhu Y."/>
            <person name="Xu X."/>
            <person name="Sun L."/>
            <person name="Chen S."/>
            <person name="Nie H."/>
            <person name="Peng J."/>
            <person name="Xu J."/>
            <person name="Wang Y."/>
            <person name="Yuan Z."/>
            <person name="Wen Y."/>
            <person name="Yao Z."/>
            <person name="Shen Y."/>
            <person name="Qiang B."/>
            <person name="Hou Y."/>
            <person name="Yu J."/>
            <person name="Jin Q."/>
        </authorList>
    </citation>
    <scope>NUCLEOTIDE SEQUENCE [LARGE SCALE GENOMIC DNA]</scope>
    <source>
        <strain>Sd197</strain>
    </source>
</reference>
<protein>
    <recommendedName>
        <fullName evidence="2">Bifunctional protein FolD</fullName>
    </recommendedName>
    <domain>
        <recommendedName>
            <fullName evidence="2">Methylenetetrahydrofolate dehydrogenase</fullName>
            <ecNumber evidence="2">1.5.1.5</ecNumber>
        </recommendedName>
    </domain>
    <domain>
        <recommendedName>
            <fullName evidence="2">Methenyltetrahydrofolate cyclohydrolase</fullName>
            <ecNumber evidence="2">3.5.4.9</ecNumber>
        </recommendedName>
    </domain>
</protein>
<dbReference type="EC" id="1.5.1.5" evidence="2"/>
<dbReference type="EC" id="3.5.4.9" evidence="2"/>
<dbReference type="EMBL" id="CP000034">
    <property type="protein sequence ID" value="ABB60500.1"/>
    <property type="molecule type" value="Genomic_DNA"/>
</dbReference>
<dbReference type="RefSeq" id="WP_000729153.1">
    <property type="nucleotide sequence ID" value="NC_007606.1"/>
</dbReference>
<dbReference type="RefSeq" id="YP_401989.1">
    <property type="nucleotide sequence ID" value="NC_007606.1"/>
</dbReference>
<dbReference type="SMR" id="Q32JK7"/>
<dbReference type="STRING" id="300267.SDY_0281"/>
<dbReference type="EnsemblBacteria" id="ABB60500">
    <property type="protein sequence ID" value="ABB60500"/>
    <property type="gene ID" value="SDY_0281"/>
</dbReference>
<dbReference type="KEGG" id="sdy:SDY_0281"/>
<dbReference type="PATRIC" id="fig|300267.13.peg.322"/>
<dbReference type="HOGENOM" id="CLU_034045_2_1_6"/>
<dbReference type="UniPathway" id="UPA00193"/>
<dbReference type="Proteomes" id="UP000002716">
    <property type="component" value="Chromosome"/>
</dbReference>
<dbReference type="GO" id="GO:0005829">
    <property type="term" value="C:cytosol"/>
    <property type="evidence" value="ECO:0007669"/>
    <property type="project" value="TreeGrafter"/>
</dbReference>
<dbReference type="GO" id="GO:0004477">
    <property type="term" value="F:methenyltetrahydrofolate cyclohydrolase activity"/>
    <property type="evidence" value="ECO:0007669"/>
    <property type="project" value="UniProtKB-UniRule"/>
</dbReference>
<dbReference type="GO" id="GO:0004488">
    <property type="term" value="F:methylenetetrahydrofolate dehydrogenase (NADP+) activity"/>
    <property type="evidence" value="ECO:0007669"/>
    <property type="project" value="UniProtKB-UniRule"/>
</dbReference>
<dbReference type="GO" id="GO:0000105">
    <property type="term" value="P:L-histidine biosynthetic process"/>
    <property type="evidence" value="ECO:0007669"/>
    <property type="project" value="UniProtKB-KW"/>
</dbReference>
<dbReference type="GO" id="GO:0009086">
    <property type="term" value="P:methionine biosynthetic process"/>
    <property type="evidence" value="ECO:0007669"/>
    <property type="project" value="UniProtKB-KW"/>
</dbReference>
<dbReference type="GO" id="GO:0006164">
    <property type="term" value="P:purine nucleotide biosynthetic process"/>
    <property type="evidence" value="ECO:0007669"/>
    <property type="project" value="UniProtKB-KW"/>
</dbReference>
<dbReference type="GO" id="GO:0035999">
    <property type="term" value="P:tetrahydrofolate interconversion"/>
    <property type="evidence" value="ECO:0007669"/>
    <property type="project" value="UniProtKB-UniRule"/>
</dbReference>
<dbReference type="CDD" id="cd01080">
    <property type="entry name" value="NAD_bind_m-THF_DH_Cyclohyd"/>
    <property type="match status" value="1"/>
</dbReference>
<dbReference type="FunFam" id="3.40.50.10860:FF:000001">
    <property type="entry name" value="Bifunctional protein FolD"/>
    <property type="match status" value="1"/>
</dbReference>
<dbReference type="FunFam" id="3.40.50.720:FF:000006">
    <property type="entry name" value="Bifunctional protein FolD"/>
    <property type="match status" value="1"/>
</dbReference>
<dbReference type="Gene3D" id="3.40.50.10860">
    <property type="entry name" value="Leucine Dehydrogenase, chain A, domain 1"/>
    <property type="match status" value="1"/>
</dbReference>
<dbReference type="Gene3D" id="3.40.50.720">
    <property type="entry name" value="NAD(P)-binding Rossmann-like Domain"/>
    <property type="match status" value="1"/>
</dbReference>
<dbReference type="HAMAP" id="MF_01576">
    <property type="entry name" value="THF_DHG_CYH"/>
    <property type="match status" value="1"/>
</dbReference>
<dbReference type="InterPro" id="IPR046346">
    <property type="entry name" value="Aminoacid_DH-like_N_sf"/>
</dbReference>
<dbReference type="InterPro" id="IPR036291">
    <property type="entry name" value="NAD(P)-bd_dom_sf"/>
</dbReference>
<dbReference type="InterPro" id="IPR000672">
    <property type="entry name" value="THF_DH/CycHdrlase"/>
</dbReference>
<dbReference type="InterPro" id="IPR020630">
    <property type="entry name" value="THF_DH/CycHdrlase_cat_dom"/>
</dbReference>
<dbReference type="InterPro" id="IPR020867">
    <property type="entry name" value="THF_DH/CycHdrlase_CS"/>
</dbReference>
<dbReference type="InterPro" id="IPR020631">
    <property type="entry name" value="THF_DH/CycHdrlase_NAD-bd_dom"/>
</dbReference>
<dbReference type="NCBIfam" id="NF008058">
    <property type="entry name" value="PRK10792.1"/>
    <property type="match status" value="1"/>
</dbReference>
<dbReference type="NCBIfam" id="NF010783">
    <property type="entry name" value="PRK14186.1"/>
    <property type="match status" value="1"/>
</dbReference>
<dbReference type="PANTHER" id="PTHR48099:SF5">
    <property type="entry name" value="C-1-TETRAHYDROFOLATE SYNTHASE, CYTOPLASMIC"/>
    <property type="match status" value="1"/>
</dbReference>
<dbReference type="PANTHER" id="PTHR48099">
    <property type="entry name" value="C-1-TETRAHYDROFOLATE SYNTHASE, CYTOPLASMIC-RELATED"/>
    <property type="match status" value="1"/>
</dbReference>
<dbReference type="Pfam" id="PF00763">
    <property type="entry name" value="THF_DHG_CYH"/>
    <property type="match status" value="1"/>
</dbReference>
<dbReference type="Pfam" id="PF02882">
    <property type="entry name" value="THF_DHG_CYH_C"/>
    <property type="match status" value="1"/>
</dbReference>
<dbReference type="PRINTS" id="PR00085">
    <property type="entry name" value="THFDHDRGNASE"/>
</dbReference>
<dbReference type="SUPFAM" id="SSF53223">
    <property type="entry name" value="Aminoacid dehydrogenase-like, N-terminal domain"/>
    <property type="match status" value="1"/>
</dbReference>
<dbReference type="SUPFAM" id="SSF51735">
    <property type="entry name" value="NAD(P)-binding Rossmann-fold domains"/>
    <property type="match status" value="1"/>
</dbReference>
<dbReference type="PROSITE" id="PS00766">
    <property type="entry name" value="THF_DHG_CYH_1"/>
    <property type="match status" value="1"/>
</dbReference>
<dbReference type="PROSITE" id="PS00767">
    <property type="entry name" value="THF_DHG_CYH_2"/>
    <property type="match status" value="1"/>
</dbReference>